<name>RIBD1_BUCAI</name>
<evidence type="ECO:0000250" key="1"/>
<evidence type="ECO:0000255" key="2">
    <source>
        <dbReference type="PROSITE-ProRule" id="PRU01083"/>
    </source>
</evidence>
<evidence type="ECO:0000305" key="3"/>
<sequence length="147" mass="16049">MNDIFYMKRAIELSKLGEFTTAPNPNVGCVIVKNNIIVGEGWHEQAGKNHAEINALIMAGEKAQGGTAYVTLEPCNHFGKTPPCCNALIKSGINRVVISNIDPNPKISGNGILYLKKHGICVKTGLLSKESKQYNKGFFKRMKTGFP</sequence>
<feature type="chain" id="PRO_0000171725" description="Diaminohydroxyphosphoribosylamino-pyrimidine deaminase">
    <location>
        <begin position="1"/>
        <end position="147"/>
    </location>
</feature>
<feature type="domain" description="CMP/dCMP-type deaminase" evidence="2">
    <location>
        <begin position="1"/>
        <end position="123"/>
    </location>
</feature>
<feature type="active site" description="Proton donor" evidence="1">
    <location>
        <position position="52"/>
    </location>
</feature>
<feature type="binding site" evidence="1">
    <location>
        <position position="50"/>
    </location>
    <ligand>
        <name>Zn(2+)</name>
        <dbReference type="ChEBI" id="CHEBI:29105"/>
        <note>catalytic</note>
    </ligand>
</feature>
<feature type="binding site" evidence="1">
    <location>
        <position position="75"/>
    </location>
    <ligand>
        <name>Zn(2+)</name>
        <dbReference type="ChEBI" id="CHEBI:29105"/>
        <note>catalytic</note>
    </ligand>
</feature>
<feature type="binding site" evidence="1">
    <location>
        <position position="84"/>
    </location>
    <ligand>
        <name>Zn(2+)</name>
        <dbReference type="ChEBI" id="CHEBI:29105"/>
        <note>catalytic</note>
    </ligand>
</feature>
<accession>P57533</accession>
<reference key="1">
    <citation type="journal article" date="2000" name="Nature">
        <title>Genome sequence of the endocellular bacterial symbiont of aphids Buchnera sp. APS.</title>
        <authorList>
            <person name="Shigenobu S."/>
            <person name="Watanabe H."/>
            <person name="Hattori M."/>
            <person name="Sakaki Y."/>
            <person name="Ishikawa H."/>
        </authorList>
    </citation>
    <scope>NUCLEOTIDE SEQUENCE [LARGE SCALE GENOMIC DNA]</scope>
    <source>
        <strain>APS</strain>
    </source>
</reference>
<keyword id="KW-0378">Hydrolase</keyword>
<keyword id="KW-0479">Metal-binding</keyword>
<keyword id="KW-1185">Reference proteome</keyword>
<keyword id="KW-0686">Riboflavin biosynthesis</keyword>
<keyword id="KW-0862">Zinc</keyword>
<dbReference type="EC" id="3.5.4.26"/>
<dbReference type="EMBL" id="BA000003">
    <property type="protein sequence ID" value="BAB13158.1"/>
    <property type="status" value="ALT_INIT"/>
    <property type="molecule type" value="Genomic_DNA"/>
</dbReference>
<dbReference type="RefSeq" id="NP_240272.1">
    <property type="nucleotide sequence ID" value="NC_002528.1"/>
</dbReference>
<dbReference type="SMR" id="P57533"/>
<dbReference type="STRING" id="563178.BUAP5A_454"/>
<dbReference type="EnsemblBacteria" id="BAB13158">
    <property type="protein sequence ID" value="BAB13158"/>
    <property type="gene ID" value="BAB13158"/>
</dbReference>
<dbReference type="KEGG" id="buc:BU461"/>
<dbReference type="PATRIC" id="fig|107806.10.peg.470"/>
<dbReference type="eggNOG" id="COG0117">
    <property type="taxonomic scope" value="Bacteria"/>
</dbReference>
<dbReference type="HOGENOM" id="CLU_036590_10_0_6"/>
<dbReference type="UniPathway" id="UPA00275">
    <property type="reaction ID" value="UER00401"/>
</dbReference>
<dbReference type="Proteomes" id="UP000001806">
    <property type="component" value="Chromosome"/>
</dbReference>
<dbReference type="GO" id="GO:0008835">
    <property type="term" value="F:diaminohydroxyphosphoribosylaminopyrimidine deaminase activity"/>
    <property type="evidence" value="ECO:0007669"/>
    <property type="project" value="UniProtKB-EC"/>
</dbReference>
<dbReference type="GO" id="GO:0008270">
    <property type="term" value="F:zinc ion binding"/>
    <property type="evidence" value="ECO:0007669"/>
    <property type="project" value="InterPro"/>
</dbReference>
<dbReference type="GO" id="GO:0009231">
    <property type="term" value="P:riboflavin biosynthetic process"/>
    <property type="evidence" value="ECO:0007669"/>
    <property type="project" value="UniProtKB-UniPathway"/>
</dbReference>
<dbReference type="CDD" id="cd01284">
    <property type="entry name" value="Riboflavin_deaminase-reductase"/>
    <property type="match status" value="1"/>
</dbReference>
<dbReference type="FunFam" id="3.40.140.10:FF:000025">
    <property type="entry name" value="Riboflavin biosynthesis protein RibD"/>
    <property type="match status" value="1"/>
</dbReference>
<dbReference type="Gene3D" id="3.40.140.10">
    <property type="entry name" value="Cytidine Deaminase, domain 2"/>
    <property type="match status" value="1"/>
</dbReference>
<dbReference type="InterPro" id="IPR016192">
    <property type="entry name" value="APOBEC/CMP_deaminase_Zn-bd"/>
</dbReference>
<dbReference type="InterPro" id="IPR002125">
    <property type="entry name" value="CMP_dCMP_dom"/>
</dbReference>
<dbReference type="InterPro" id="IPR016193">
    <property type="entry name" value="Cytidine_deaminase-like"/>
</dbReference>
<dbReference type="InterPro" id="IPR004794">
    <property type="entry name" value="Eubact_RibD"/>
</dbReference>
<dbReference type="NCBIfam" id="TIGR00326">
    <property type="entry name" value="eubact_ribD"/>
    <property type="match status" value="1"/>
</dbReference>
<dbReference type="PANTHER" id="PTHR11079">
    <property type="entry name" value="CYTOSINE DEAMINASE FAMILY MEMBER"/>
    <property type="match status" value="1"/>
</dbReference>
<dbReference type="PANTHER" id="PTHR11079:SF162">
    <property type="entry name" value="RIBOFLAVIN BIOSYNTHESIS PROTEIN PYRD, CHLOROPLASTIC"/>
    <property type="match status" value="1"/>
</dbReference>
<dbReference type="Pfam" id="PF00383">
    <property type="entry name" value="dCMP_cyt_deam_1"/>
    <property type="match status" value="1"/>
</dbReference>
<dbReference type="SUPFAM" id="SSF53927">
    <property type="entry name" value="Cytidine deaminase-like"/>
    <property type="match status" value="1"/>
</dbReference>
<dbReference type="PROSITE" id="PS00903">
    <property type="entry name" value="CYT_DCMP_DEAMINASES_1"/>
    <property type="match status" value="1"/>
</dbReference>
<dbReference type="PROSITE" id="PS51747">
    <property type="entry name" value="CYT_DCMP_DEAMINASES_2"/>
    <property type="match status" value="1"/>
</dbReference>
<comment type="catalytic activity">
    <reaction>
        <text>2,5-diamino-6-hydroxy-4-(5-phosphoribosylamino)-pyrimidine + H2O + H(+) = 5-amino-6-(5-phospho-D-ribosylamino)uracil + NH4(+)</text>
        <dbReference type="Rhea" id="RHEA:21868"/>
        <dbReference type="ChEBI" id="CHEBI:15377"/>
        <dbReference type="ChEBI" id="CHEBI:15378"/>
        <dbReference type="ChEBI" id="CHEBI:28938"/>
        <dbReference type="ChEBI" id="CHEBI:58453"/>
        <dbReference type="ChEBI" id="CHEBI:58614"/>
        <dbReference type="EC" id="3.5.4.26"/>
    </reaction>
</comment>
<comment type="cofactor">
    <cofactor evidence="1">
        <name>Zn(2+)</name>
        <dbReference type="ChEBI" id="CHEBI:29105"/>
    </cofactor>
    <text evidence="1">Binds 1 zinc ion.</text>
</comment>
<comment type="pathway">
    <text>Cofactor biosynthesis; riboflavin biosynthesis; 5-amino-6-(D-ribitylamino)uracil from GTP: step 2/4.</text>
</comment>
<comment type="similarity">
    <text evidence="3">Belongs to the cytidine and deoxycytidylate deaminase family.</text>
</comment>
<comment type="sequence caution" evidence="3">
    <conflict type="erroneous initiation">
        <sequence resource="EMBL-CDS" id="BAB13158"/>
    </conflict>
</comment>
<organism>
    <name type="scientific">Buchnera aphidicola subsp. Acyrthosiphon pisum (strain APS)</name>
    <name type="common">Acyrthosiphon pisum symbiotic bacterium</name>
    <dbReference type="NCBI Taxonomy" id="107806"/>
    <lineage>
        <taxon>Bacteria</taxon>
        <taxon>Pseudomonadati</taxon>
        <taxon>Pseudomonadota</taxon>
        <taxon>Gammaproteobacteria</taxon>
        <taxon>Enterobacterales</taxon>
        <taxon>Erwiniaceae</taxon>
        <taxon>Buchnera</taxon>
    </lineage>
</organism>
<proteinExistence type="inferred from homology"/>
<gene>
    <name type="primary">ribD1</name>
    <name type="ordered locus">BU461</name>
</gene>
<protein>
    <recommendedName>
        <fullName>Diaminohydroxyphosphoribosylamino-pyrimidine deaminase</fullName>
        <shortName>DRAP deaminase</shortName>
        <ecNumber>3.5.4.26</ecNumber>
    </recommendedName>
    <alternativeName>
        <fullName>Riboflavin-specific deaminase</fullName>
    </alternativeName>
</protein>